<sequence>MKSDIQIAQEAKMEPIKNVAEKLGLCEDDIEYYGKYKCKISLDVYDKVKNNNNGKLVLVTAINPTPAGEGKSTVTVGLGQALNRIGKKAVIALREPSLGPVFGIKGGAAGGGYAQVVPMEDINLHFTGDMHAITSANNLLSAAIDNHIHQGNVLRIDSRRIVFKRVMDMNDRALRHIIVGMGGKVNGFVREDGFNITVASEIMAILCLASDLEDLKERMGNIVIAYNLDGNPVYAKELEIQGAMALLMKDAIKPNLVQTLENTPALIHGGPFANIAHGCNSIMATKLALKLGDVVITEAGFGADLGAEKFFDIKCRYGNLEPECVVVVATIRALKHHGGVAKTELNIPNVEALKDGIANLEKQIENIKKFKITPVVAINKFVTDSSEEVEFIKDFCDRIGVKVALCDVWAKGGEGGIDLANIVLDALENSESNFEPIYDKEKSIREKIFTIASEIYGADKVNYTPAAKKQIDELEKFKLDKLPICMAKTQYSLSDNPSLLARPTGFDITVKEVRVSNGAGFIVVQTGDIMTMPGLPKVPAANKMDVLKSGEIIGLF</sequence>
<feature type="chain" id="PRO_1000087650" description="Formate--tetrahydrofolate ligase">
    <location>
        <begin position="1"/>
        <end position="556"/>
    </location>
</feature>
<feature type="binding site" evidence="1">
    <location>
        <begin position="65"/>
        <end position="72"/>
    </location>
    <ligand>
        <name>ATP</name>
        <dbReference type="ChEBI" id="CHEBI:30616"/>
    </ligand>
</feature>
<dbReference type="EC" id="6.3.4.3" evidence="1"/>
<dbReference type="EMBL" id="CP000721">
    <property type="protein sequence ID" value="ABR32291.1"/>
    <property type="molecule type" value="Genomic_DNA"/>
</dbReference>
<dbReference type="RefSeq" id="WP_011967465.1">
    <property type="nucleotide sequence ID" value="NC_009617.1"/>
</dbReference>
<dbReference type="SMR" id="A6LPL1"/>
<dbReference type="KEGG" id="cbe:Cbei_0101"/>
<dbReference type="eggNOG" id="COG2759">
    <property type="taxonomic scope" value="Bacteria"/>
</dbReference>
<dbReference type="HOGENOM" id="CLU_003601_3_3_9"/>
<dbReference type="UniPathway" id="UPA00193"/>
<dbReference type="Proteomes" id="UP000000565">
    <property type="component" value="Chromosome"/>
</dbReference>
<dbReference type="GO" id="GO:0005524">
    <property type="term" value="F:ATP binding"/>
    <property type="evidence" value="ECO:0007669"/>
    <property type="project" value="UniProtKB-UniRule"/>
</dbReference>
<dbReference type="GO" id="GO:0004329">
    <property type="term" value="F:formate-tetrahydrofolate ligase activity"/>
    <property type="evidence" value="ECO:0007669"/>
    <property type="project" value="UniProtKB-UniRule"/>
</dbReference>
<dbReference type="GO" id="GO:0035999">
    <property type="term" value="P:tetrahydrofolate interconversion"/>
    <property type="evidence" value="ECO:0007669"/>
    <property type="project" value="UniProtKB-UniRule"/>
</dbReference>
<dbReference type="CDD" id="cd00477">
    <property type="entry name" value="FTHFS"/>
    <property type="match status" value="1"/>
</dbReference>
<dbReference type="FunFam" id="3.30.1510.10:FF:000001">
    <property type="entry name" value="Formate--tetrahydrofolate ligase"/>
    <property type="match status" value="1"/>
</dbReference>
<dbReference type="FunFam" id="3.10.410.10:FF:000001">
    <property type="entry name" value="Putative formate--tetrahydrofolate ligase"/>
    <property type="match status" value="1"/>
</dbReference>
<dbReference type="Gene3D" id="3.30.1510.10">
    <property type="entry name" value="Domain 2, N(10)-formyltetrahydrofolate synthetase"/>
    <property type="match status" value="1"/>
</dbReference>
<dbReference type="Gene3D" id="3.10.410.10">
    <property type="entry name" value="Formyltetrahydrofolate synthetase, domain 3"/>
    <property type="match status" value="1"/>
</dbReference>
<dbReference type="Gene3D" id="3.40.50.300">
    <property type="entry name" value="P-loop containing nucleotide triphosphate hydrolases"/>
    <property type="match status" value="1"/>
</dbReference>
<dbReference type="HAMAP" id="MF_01543">
    <property type="entry name" value="FTHFS"/>
    <property type="match status" value="1"/>
</dbReference>
<dbReference type="InterPro" id="IPR000559">
    <property type="entry name" value="Formate_THF_ligase"/>
</dbReference>
<dbReference type="InterPro" id="IPR020628">
    <property type="entry name" value="Formate_THF_ligase_CS"/>
</dbReference>
<dbReference type="InterPro" id="IPR027417">
    <property type="entry name" value="P-loop_NTPase"/>
</dbReference>
<dbReference type="NCBIfam" id="NF010030">
    <property type="entry name" value="PRK13505.1"/>
    <property type="match status" value="1"/>
</dbReference>
<dbReference type="Pfam" id="PF01268">
    <property type="entry name" value="FTHFS"/>
    <property type="match status" value="1"/>
</dbReference>
<dbReference type="SUPFAM" id="SSF52540">
    <property type="entry name" value="P-loop containing nucleoside triphosphate hydrolases"/>
    <property type="match status" value="1"/>
</dbReference>
<dbReference type="PROSITE" id="PS00721">
    <property type="entry name" value="FTHFS_1"/>
    <property type="match status" value="1"/>
</dbReference>
<dbReference type="PROSITE" id="PS00722">
    <property type="entry name" value="FTHFS_2"/>
    <property type="match status" value="1"/>
</dbReference>
<comment type="catalytic activity">
    <reaction evidence="1">
        <text>(6S)-5,6,7,8-tetrahydrofolate + formate + ATP = (6R)-10-formyltetrahydrofolate + ADP + phosphate</text>
        <dbReference type="Rhea" id="RHEA:20221"/>
        <dbReference type="ChEBI" id="CHEBI:15740"/>
        <dbReference type="ChEBI" id="CHEBI:30616"/>
        <dbReference type="ChEBI" id="CHEBI:43474"/>
        <dbReference type="ChEBI" id="CHEBI:57453"/>
        <dbReference type="ChEBI" id="CHEBI:195366"/>
        <dbReference type="ChEBI" id="CHEBI:456216"/>
        <dbReference type="EC" id="6.3.4.3"/>
    </reaction>
</comment>
<comment type="pathway">
    <text evidence="1">One-carbon metabolism; tetrahydrofolate interconversion.</text>
</comment>
<comment type="similarity">
    <text evidence="1">Belongs to the formate--tetrahydrofolate ligase family.</text>
</comment>
<accession>A6LPL1</accession>
<keyword id="KW-0067">ATP-binding</keyword>
<keyword id="KW-0436">Ligase</keyword>
<keyword id="KW-0547">Nucleotide-binding</keyword>
<keyword id="KW-0554">One-carbon metabolism</keyword>
<gene>
    <name evidence="1" type="primary">fhs</name>
    <name type="ordered locus">Cbei_0101</name>
</gene>
<evidence type="ECO:0000255" key="1">
    <source>
        <dbReference type="HAMAP-Rule" id="MF_01543"/>
    </source>
</evidence>
<organism>
    <name type="scientific">Clostridium beijerinckii (strain ATCC 51743 / NCIMB 8052)</name>
    <name type="common">Clostridium acetobutylicum</name>
    <dbReference type="NCBI Taxonomy" id="290402"/>
    <lineage>
        <taxon>Bacteria</taxon>
        <taxon>Bacillati</taxon>
        <taxon>Bacillota</taxon>
        <taxon>Clostridia</taxon>
        <taxon>Eubacteriales</taxon>
        <taxon>Clostridiaceae</taxon>
        <taxon>Clostridium</taxon>
    </lineage>
</organism>
<name>FTHS_CLOB8</name>
<protein>
    <recommendedName>
        <fullName evidence="1">Formate--tetrahydrofolate ligase</fullName>
        <ecNumber evidence="1">6.3.4.3</ecNumber>
    </recommendedName>
    <alternativeName>
        <fullName evidence="1">Formyltetrahydrofolate synthetase</fullName>
        <shortName evidence="1">FHS</shortName>
        <shortName evidence="1">FTHFS</shortName>
    </alternativeName>
</protein>
<reference key="1">
    <citation type="submission" date="2007-06" db="EMBL/GenBank/DDBJ databases">
        <title>Complete sequence of Clostridium beijerinckii NCIMB 8052.</title>
        <authorList>
            <consortium name="US DOE Joint Genome Institute"/>
            <person name="Copeland A."/>
            <person name="Lucas S."/>
            <person name="Lapidus A."/>
            <person name="Barry K."/>
            <person name="Detter J.C."/>
            <person name="Glavina del Rio T."/>
            <person name="Hammon N."/>
            <person name="Israni S."/>
            <person name="Dalin E."/>
            <person name="Tice H."/>
            <person name="Pitluck S."/>
            <person name="Sims D."/>
            <person name="Brettin T."/>
            <person name="Bruce D."/>
            <person name="Tapia R."/>
            <person name="Brainard J."/>
            <person name="Schmutz J."/>
            <person name="Larimer F."/>
            <person name="Land M."/>
            <person name="Hauser L."/>
            <person name="Kyrpides N."/>
            <person name="Mikhailova N."/>
            <person name="Bennet G."/>
            <person name="Cann I."/>
            <person name="Chen J.-S."/>
            <person name="Contreras A.L."/>
            <person name="Jones D."/>
            <person name="Kashket E."/>
            <person name="Mitchell W."/>
            <person name="Stoddard S."/>
            <person name="Schwarz W."/>
            <person name="Qureshi N."/>
            <person name="Young M."/>
            <person name="Shi Z."/>
            <person name="Ezeji T."/>
            <person name="White B."/>
            <person name="Blaschek H."/>
            <person name="Richardson P."/>
        </authorList>
    </citation>
    <scope>NUCLEOTIDE SEQUENCE [LARGE SCALE GENOMIC DNA]</scope>
    <source>
        <strain>ATCC 51743 / NCIMB 8052</strain>
    </source>
</reference>
<proteinExistence type="inferred from homology"/>